<name>LEU1_STAAM</name>
<feature type="chain" id="PRO_0000140379" description="2-isopropylmalate synthase">
    <location>
        <begin position="1"/>
        <end position="509"/>
    </location>
</feature>
<feature type="domain" description="Pyruvate carboxyltransferase" evidence="1">
    <location>
        <begin position="5"/>
        <end position="267"/>
    </location>
</feature>
<feature type="region of interest" description="Regulatory domain" evidence="1">
    <location>
        <begin position="391"/>
        <end position="509"/>
    </location>
</feature>
<feature type="binding site" evidence="1">
    <location>
        <position position="14"/>
    </location>
    <ligand>
        <name>Mn(2+)</name>
        <dbReference type="ChEBI" id="CHEBI:29035"/>
    </ligand>
</feature>
<feature type="binding site" evidence="1">
    <location>
        <position position="202"/>
    </location>
    <ligand>
        <name>Mn(2+)</name>
        <dbReference type="ChEBI" id="CHEBI:29035"/>
    </ligand>
</feature>
<feature type="binding site" evidence="1">
    <location>
        <position position="204"/>
    </location>
    <ligand>
        <name>Mn(2+)</name>
        <dbReference type="ChEBI" id="CHEBI:29035"/>
    </ligand>
</feature>
<feature type="binding site" evidence="1">
    <location>
        <position position="238"/>
    </location>
    <ligand>
        <name>Mn(2+)</name>
        <dbReference type="ChEBI" id="CHEBI:29035"/>
    </ligand>
</feature>
<gene>
    <name evidence="1" type="primary">leuA</name>
    <name type="ordered locus">SAV2057</name>
</gene>
<protein>
    <recommendedName>
        <fullName evidence="1">2-isopropylmalate synthase</fullName>
        <ecNumber evidence="1">2.3.3.13</ecNumber>
    </recommendedName>
    <alternativeName>
        <fullName evidence="1">Alpha-IPM synthase</fullName>
    </alternativeName>
    <alternativeName>
        <fullName evidence="1">Alpha-isopropylmalate synthase</fullName>
    </alternativeName>
</protein>
<sequence>MSSHIQIFDTTLRDGEQTPGVNFTFDERLRIALQLEKWGVDVIEAGFPASSTGSFKSVQAIAQTLTTTAVCGLARCKKSDIDAVYEATKDAAKPVVHVFIATSPIHLEHKLKMSQEDVLASIKEHVTYAKQLFDVVQFSPEDATRTELPFLVKCVQTAVDAGATVINIPDTVGYSYHDEYAHIFKTLTESVTSSNEIIYSAHCHDDLGMAVSNSLAAIEGGARRIEGTVNGIGERAGNAALEEVALALYVRNDHYGAQTALNLEETKKTSDLISRYAGIRVPRNKAIVGQNAFSHESGIHQDGVLKHRETYEIMTPQLVGVSTTELPLGKLSGKHAFSEKLKALGYNIDKEAQIDLFKQFKTIADKKKSVSDRDIHAIIQGSEHEHQALYKLETLQLQYVSSGLQSAVVVVKDKEGHIYQDSSIGTGSIVAIYNAVDRIFQKETELIDYRINSVTEGTDAQAEVHVNLLIEGKTVNGFGIDHDILQASCKAYVEAHAKFAAENVEKVGN</sequence>
<evidence type="ECO:0000255" key="1">
    <source>
        <dbReference type="HAMAP-Rule" id="MF_01025"/>
    </source>
</evidence>
<proteinExistence type="inferred from homology"/>
<keyword id="KW-0028">Amino-acid biosynthesis</keyword>
<keyword id="KW-0100">Branched-chain amino acid biosynthesis</keyword>
<keyword id="KW-0963">Cytoplasm</keyword>
<keyword id="KW-0432">Leucine biosynthesis</keyword>
<keyword id="KW-0464">Manganese</keyword>
<keyword id="KW-0479">Metal-binding</keyword>
<keyword id="KW-0808">Transferase</keyword>
<dbReference type="EC" id="2.3.3.13" evidence="1"/>
<dbReference type="EMBL" id="BA000017">
    <property type="protein sequence ID" value="BAB58219.1"/>
    <property type="molecule type" value="Genomic_DNA"/>
</dbReference>
<dbReference type="RefSeq" id="WP_000094583.1">
    <property type="nucleotide sequence ID" value="NC_002758.2"/>
</dbReference>
<dbReference type="SMR" id="P63476"/>
<dbReference type="KEGG" id="sav:SAV2057"/>
<dbReference type="HOGENOM" id="CLU_022158_0_1_9"/>
<dbReference type="PhylomeDB" id="P63476"/>
<dbReference type="UniPathway" id="UPA00048">
    <property type="reaction ID" value="UER00070"/>
</dbReference>
<dbReference type="Proteomes" id="UP000002481">
    <property type="component" value="Chromosome"/>
</dbReference>
<dbReference type="GO" id="GO:0005737">
    <property type="term" value="C:cytoplasm"/>
    <property type="evidence" value="ECO:0007669"/>
    <property type="project" value="UniProtKB-SubCell"/>
</dbReference>
<dbReference type="GO" id="GO:0003852">
    <property type="term" value="F:2-isopropylmalate synthase activity"/>
    <property type="evidence" value="ECO:0007669"/>
    <property type="project" value="UniProtKB-UniRule"/>
</dbReference>
<dbReference type="GO" id="GO:0003985">
    <property type="term" value="F:acetyl-CoA C-acetyltransferase activity"/>
    <property type="evidence" value="ECO:0007669"/>
    <property type="project" value="UniProtKB-UniRule"/>
</dbReference>
<dbReference type="GO" id="GO:0030145">
    <property type="term" value="F:manganese ion binding"/>
    <property type="evidence" value="ECO:0007669"/>
    <property type="project" value="UniProtKB-UniRule"/>
</dbReference>
<dbReference type="GO" id="GO:0009098">
    <property type="term" value="P:L-leucine biosynthetic process"/>
    <property type="evidence" value="ECO:0007669"/>
    <property type="project" value="UniProtKB-UniRule"/>
</dbReference>
<dbReference type="CDD" id="cd07940">
    <property type="entry name" value="DRE_TIM_IPMS"/>
    <property type="match status" value="1"/>
</dbReference>
<dbReference type="FunFam" id="1.10.238.260:FF:000001">
    <property type="entry name" value="2-isopropylmalate synthase"/>
    <property type="match status" value="1"/>
</dbReference>
<dbReference type="FunFam" id="3.20.20.70:FF:000010">
    <property type="entry name" value="2-isopropylmalate synthase"/>
    <property type="match status" value="1"/>
</dbReference>
<dbReference type="FunFam" id="3.30.160.270:FF:000003">
    <property type="entry name" value="2-isopropylmalate synthase"/>
    <property type="match status" value="1"/>
</dbReference>
<dbReference type="Gene3D" id="1.10.238.260">
    <property type="match status" value="1"/>
</dbReference>
<dbReference type="Gene3D" id="3.30.160.270">
    <property type="match status" value="1"/>
</dbReference>
<dbReference type="Gene3D" id="3.20.20.70">
    <property type="entry name" value="Aldolase class I"/>
    <property type="match status" value="1"/>
</dbReference>
<dbReference type="HAMAP" id="MF_01025">
    <property type="entry name" value="LeuA_type1"/>
    <property type="match status" value="1"/>
</dbReference>
<dbReference type="InterPro" id="IPR050073">
    <property type="entry name" value="2-IPM_HCS-like"/>
</dbReference>
<dbReference type="InterPro" id="IPR013709">
    <property type="entry name" value="2-isopropylmalate_synth_dimer"/>
</dbReference>
<dbReference type="InterPro" id="IPR013785">
    <property type="entry name" value="Aldolase_TIM"/>
</dbReference>
<dbReference type="InterPro" id="IPR054691">
    <property type="entry name" value="LeuA/HCS_post-cat"/>
</dbReference>
<dbReference type="InterPro" id="IPR036230">
    <property type="entry name" value="LeuA_allosteric_dom_sf"/>
</dbReference>
<dbReference type="InterPro" id="IPR005671">
    <property type="entry name" value="LeuA_bact_synth"/>
</dbReference>
<dbReference type="InterPro" id="IPR000891">
    <property type="entry name" value="PYR_CT"/>
</dbReference>
<dbReference type="NCBIfam" id="TIGR00973">
    <property type="entry name" value="leuA_bact"/>
    <property type="match status" value="1"/>
</dbReference>
<dbReference type="NCBIfam" id="NF002086">
    <property type="entry name" value="PRK00915.1-3"/>
    <property type="match status" value="1"/>
</dbReference>
<dbReference type="NCBIfam" id="NF002088">
    <property type="entry name" value="PRK00915.1-5"/>
    <property type="match status" value="1"/>
</dbReference>
<dbReference type="PANTHER" id="PTHR10277:SF9">
    <property type="entry name" value="2-ISOPROPYLMALATE SYNTHASE 1, CHLOROPLASTIC-RELATED"/>
    <property type="match status" value="1"/>
</dbReference>
<dbReference type="PANTHER" id="PTHR10277">
    <property type="entry name" value="HOMOCITRATE SYNTHASE-RELATED"/>
    <property type="match status" value="1"/>
</dbReference>
<dbReference type="Pfam" id="PF22617">
    <property type="entry name" value="HCS_D2"/>
    <property type="match status" value="1"/>
</dbReference>
<dbReference type="Pfam" id="PF00682">
    <property type="entry name" value="HMGL-like"/>
    <property type="match status" value="1"/>
</dbReference>
<dbReference type="Pfam" id="PF08502">
    <property type="entry name" value="LeuA_dimer"/>
    <property type="match status" value="1"/>
</dbReference>
<dbReference type="SMART" id="SM00917">
    <property type="entry name" value="LeuA_dimer"/>
    <property type="match status" value="1"/>
</dbReference>
<dbReference type="SUPFAM" id="SSF110921">
    <property type="entry name" value="2-isopropylmalate synthase LeuA, allosteric (dimerisation) domain"/>
    <property type="match status" value="1"/>
</dbReference>
<dbReference type="SUPFAM" id="SSF51569">
    <property type="entry name" value="Aldolase"/>
    <property type="match status" value="1"/>
</dbReference>
<dbReference type="PROSITE" id="PS50991">
    <property type="entry name" value="PYR_CT"/>
    <property type="match status" value="1"/>
</dbReference>
<reference key="1">
    <citation type="journal article" date="2001" name="Lancet">
        <title>Whole genome sequencing of meticillin-resistant Staphylococcus aureus.</title>
        <authorList>
            <person name="Kuroda M."/>
            <person name="Ohta T."/>
            <person name="Uchiyama I."/>
            <person name="Baba T."/>
            <person name="Yuzawa H."/>
            <person name="Kobayashi I."/>
            <person name="Cui L."/>
            <person name="Oguchi A."/>
            <person name="Aoki K."/>
            <person name="Nagai Y."/>
            <person name="Lian J.-Q."/>
            <person name="Ito T."/>
            <person name="Kanamori M."/>
            <person name="Matsumaru H."/>
            <person name="Maruyama A."/>
            <person name="Murakami H."/>
            <person name="Hosoyama A."/>
            <person name="Mizutani-Ui Y."/>
            <person name="Takahashi N.K."/>
            <person name="Sawano T."/>
            <person name="Inoue R."/>
            <person name="Kaito C."/>
            <person name="Sekimizu K."/>
            <person name="Hirakawa H."/>
            <person name="Kuhara S."/>
            <person name="Goto S."/>
            <person name="Yabuzaki J."/>
            <person name="Kanehisa M."/>
            <person name="Yamashita A."/>
            <person name="Oshima K."/>
            <person name="Furuya K."/>
            <person name="Yoshino C."/>
            <person name="Shiba T."/>
            <person name="Hattori M."/>
            <person name="Ogasawara N."/>
            <person name="Hayashi H."/>
            <person name="Hiramatsu K."/>
        </authorList>
    </citation>
    <scope>NUCLEOTIDE SEQUENCE [LARGE SCALE GENOMIC DNA]</scope>
    <source>
        <strain>Mu50 / ATCC 700699</strain>
    </source>
</reference>
<comment type="function">
    <text evidence="1">Catalyzes the condensation of the acetyl group of acetyl-CoA with 3-methyl-2-oxobutanoate (2-ketoisovalerate) to form 3-carboxy-3-hydroxy-4-methylpentanoate (2-isopropylmalate).</text>
</comment>
<comment type="catalytic activity">
    <reaction evidence="1">
        <text>3-methyl-2-oxobutanoate + acetyl-CoA + H2O = (2S)-2-isopropylmalate + CoA + H(+)</text>
        <dbReference type="Rhea" id="RHEA:21524"/>
        <dbReference type="ChEBI" id="CHEBI:1178"/>
        <dbReference type="ChEBI" id="CHEBI:11851"/>
        <dbReference type="ChEBI" id="CHEBI:15377"/>
        <dbReference type="ChEBI" id="CHEBI:15378"/>
        <dbReference type="ChEBI" id="CHEBI:57287"/>
        <dbReference type="ChEBI" id="CHEBI:57288"/>
        <dbReference type="EC" id="2.3.3.13"/>
    </reaction>
</comment>
<comment type="cofactor">
    <cofactor evidence="1">
        <name>Mn(2+)</name>
        <dbReference type="ChEBI" id="CHEBI:29035"/>
    </cofactor>
</comment>
<comment type="pathway">
    <text evidence="1">Amino-acid biosynthesis; L-leucine biosynthesis; L-leucine from 3-methyl-2-oxobutanoate: step 1/4.</text>
</comment>
<comment type="subunit">
    <text evidence="1">Homodimer.</text>
</comment>
<comment type="subcellular location">
    <subcellularLocation>
        <location evidence="1">Cytoplasm</location>
    </subcellularLocation>
</comment>
<comment type="similarity">
    <text evidence="1">Belongs to the alpha-IPM synthase/homocitrate synthase family. LeuA type 1 subfamily.</text>
</comment>
<organism>
    <name type="scientific">Staphylococcus aureus (strain Mu50 / ATCC 700699)</name>
    <dbReference type="NCBI Taxonomy" id="158878"/>
    <lineage>
        <taxon>Bacteria</taxon>
        <taxon>Bacillati</taxon>
        <taxon>Bacillota</taxon>
        <taxon>Bacilli</taxon>
        <taxon>Bacillales</taxon>
        <taxon>Staphylococcaceae</taxon>
        <taxon>Staphylococcus</taxon>
    </lineage>
</organism>
<accession>P63476</accession>
<accession>Q99SJ5</accession>